<protein>
    <recommendedName>
        <fullName>Double zinc ribbon and ankyrin repeat-containing protein 1</fullName>
    </recommendedName>
</protein>
<keyword id="KW-0040">ANK repeat</keyword>
<keyword id="KW-0966">Cell projection</keyword>
<keyword id="KW-0963">Cytoplasm</keyword>
<keyword id="KW-0206">Cytoskeleton</keyword>
<keyword id="KW-0903">Direct protein sequencing</keyword>
<keyword id="KW-0479">Metal-binding</keyword>
<keyword id="KW-0597">Phosphoprotein</keyword>
<keyword id="KW-1185">Reference proteome</keyword>
<keyword id="KW-0677">Repeat</keyword>
<keyword id="KW-0862">Zinc</keyword>
<keyword id="KW-0863">Zinc-finger</keyword>
<reference key="1">
    <citation type="journal article" date="2005" name="Science">
        <title>The transcriptional landscape of the mammalian genome.</title>
        <authorList>
            <person name="Carninci P."/>
            <person name="Kasukawa T."/>
            <person name="Katayama S."/>
            <person name="Gough J."/>
            <person name="Frith M.C."/>
            <person name="Maeda N."/>
            <person name="Oyama R."/>
            <person name="Ravasi T."/>
            <person name="Lenhard B."/>
            <person name="Wells C."/>
            <person name="Kodzius R."/>
            <person name="Shimokawa K."/>
            <person name="Bajic V.B."/>
            <person name="Brenner S.E."/>
            <person name="Batalov S."/>
            <person name="Forrest A.R."/>
            <person name="Zavolan M."/>
            <person name="Davis M.J."/>
            <person name="Wilming L.G."/>
            <person name="Aidinis V."/>
            <person name="Allen J.E."/>
            <person name="Ambesi-Impiombato A."/>
            <person name="Apweiler R."/>
            <person name="Aturaliya R.N."/>
            <person name="Bailey T.L."/>
            <person name="Bansal M."/>
            <person name="Baxter L."/>
            <person name="Beisel K.W."/>
            <person name="Bersano T."/>
            <person name="Bono H."/>
            <person name="Chalk A.M."/>
            <person name="Chiu K.P."/>
            <person name="Choudhary V."/>
            <person name="Christoffels A."/>
            <person name="Clutterbuck D.R."/>
            <person name="Crowe M.L."/>
            <person name="Dalla E."/>
            <person name="Dalrymple B.P."/>
            <person name="de Bono B."/>
            <person name="Della Gatta G."/>
            <person name="di Bernardo D."/>
            <person name="Down T."/>
            <person name="Engstrom P."/>
            <person name="Fagiolini M."/>
            <person name="Faulkner G."/>
            <person name="Fletcher C.F."/>
            <person name="Fukushima T."/>
            <person name="Furuno M."/>
            <person name="Futaki S."/>
            <person name="Gariboldi M."/>
            <person name="Georgii-Hemming P."/>
            <person name="Gingeras T.R."/>
            <person name="Gojobori T."/>
            <person name="Green R.E."/>
            <person name="Gustincich S."/>
            <person name="Harbers M."/>
            <person name="Hayashi Y."/>
            <person name="Hensch T.K."/>
            <person name="Hirokawa N."/>
            <person name="Hill D."/>
            <person name="Huminiecki L."/>
            <person name="Iacono M."/>
            <person name="Ikeo K."/>
            <person name="Iwama A."/>
            <person name="Ishikawa T."/>
            <person name="Jakt M."/>
            <person name="Kanapin A."/>
            <person name="Katoh M."/>
            <person name="Kawasawa Y."/>
            <person name="Kelso J."/>
            <person name="Kitamura H."/>
            <person name="Kitano H."/>
            <person name="Kollias G."/>
            <person name="Krishnan S.P."/>
            <person name="Kruger A."/>
            <person name="Kummerfeld S.K."/>
            <person name="Kurochkin I.V."/>
            <person name="Lareau L.F."/>
            <person name="Lazarevic D."/>
            <person name="Lipovich L."/>
            <person name="Liu J."/>
            <person name="Liuni S."/>
            <person name="McWilliam S."/>
            <person name="Madan Babu M."/>
            <person name="Madera M."/>
            <person name="Marchionni L."/>
            <person name="Matsuda H."/>
            <person name="Matsuzawa S."/>
            <person name="Miki H."/>
            <person name="Mignone F."/>
            <person name="Miyake S."/>
            <person name="Morris K."/>
            <person name="Mottagui-Tabar S."/>
            <person name="Mulder N."/>
            <person name="Nakano N."/>
            <person name="Nakauchi H."/>
            <person name="Ng P."/>
            <person name="Nilsson R."/>
            <person name="Nishiguchi S."/>
            <person name="Nishikawa S."/>
            <person name="Nori F."/>
            <person name="Ohara O."/>
            <person name="Okazaki Y."/>
            <person name="Orlando V."/>
            <person name="Pang K.C."/>
            <person name="Pavan W.J."/>
            <person name="Pavesi G."/>
            <person name="Pesole G."/>
            <person name="Petrovsky N."/>
            <person name="Piazza S."/>
            <person name="Reed J."/>
            <person name="Reid J.F."/>
            <person name="Ring B.Z."/>
            <person name="Ringwald M."/>
            <person name="Rost B."/>
            <person name="Ruan Y."/>
            <person name="Salzberg S.L."/>
            <person name="Sandelin A."/>
            <person name="Schneider C."/>
            <person name="Schoenbach C."/>
            <person name="Sekiguchi K."/>
            <person name="Semple C.A."/>
            <person name="Seno S."/>
            <person name="Sessa L."/>
            <person name="Sheng Y."/>
            <person name="Shibata Y."/>
            <person name="Shimada H."/>
            <person name="Shimada K."/>
            <person name="Silva D."/>
            <person name="Sinclair B."/>
            <person name="Sperling S."/>
            <person name="Stupka E."/>
            <person name="Sugiura K."/>
            <person name="Sultana R."/>
            <person name="Takenaka Y."/>
            <person name="Taki K."/>
            <person name="Tammoja K."/>
            <person name="Tan S.L."/>
            <person name="Tang S."/>
            <person name="Taylor M.S."/>
            <person name="Tegner J."/>
            <person name="Teichmann S.A."/>
            <person name="Ueda H.R."/>
            <person name="van Nimwegen E."/>
            <person name="Verardo R."/>
            <person name="Wei C.L."/>
            <person name="Yagi K."/>
            <person name="Yamanishi H."/>
            <person name="Zabarovsky E."/>
            <person name="Zhu S."/>
            <person name="Zimmer A."/>
            <person name="Hide W."/>
            <person name="Bult C."/>
            <person name="Grimmond S.M."/>
            <person name="Teasdale R.D."/>
            <person name="Liu E.T."/>
            <person name="Brusic V."/>
            <person name="Quackenbush J."/>
            <person name="Wahlestedt C."/>
            <person name="Mattick J.S."/>
            <person name="Hume D.A."/>
            <person name="Kai C."/>
            <person name="Sasaki D."/>
            <person name="Tomaru Y."/>
            <person name="Fukuda S."/>
            <person name="Kanamori-Katayama M."/>
            <person name="Suzuki M."/>
            <person name="Aoki J."/>
            <person name="Arakawa T."/>
            <person name="Iida J."/>
            <person name="Imamura K."/>
            <person name="Itoh M."/>
            <person name="Kato T."/>
            <person name="Kawaji H."/>
            <person name="Kawagashira N."/>
            <person name="Kawashima T."/>
            <person name="Kojima M."/>
            <person name="Kondo S."/>
            <person name="Konno H."/>
            <person name="Nakano K."/>
            <person name="Ninomiya N."/>
            <person name="Nishio T."/>
            <person name="Okada M."/>
            <person name="Plessy C."/>
            <person name="Shibata K."/>
            <person name="Shiraki T."/>
            <person name="Suzuki S."/>
            <person name="Tagami M."/>
            <person name="Waki K."/>
            <person name="Watahiki A."/>
            <person name="Okamura-Oho Y."/>
            <person name="Suzuki H."/>
            <person name="Kawai J."/>
            <person name="Hayashizaki Y."/>
        </authorList>
    </citation>
    <scope>NUCLEOTIDE SEQUENCE [LARGE SCALE MRNA]</scope>
    <source>
        <strain>C57BL/6J</strain>
        <tissue>Cerebellum</tissue>
        <tissue>Olfactory bulb</tissue>
    </source>
</reference>
<reference key="2">
    <citation type="journal article" date="2009" name="PLoS Biol.">
        <title>Lineage-specific biology revealed by a finished genome assembly of the mouse.</title>
        <authorList>
            <person name="Church D.M."/>
            <person name="Goodstadt L."/>
            <person name="Hillier L.W."/>
            <person name="Zody M.C."/>
            <person name="Goldstein S."/>
            <person name="She X."/>
            <person name="Bult C.J."/>
            <person name="Agarwala R."/>
            <person name="Cherry J.L."/>
            <person name="DiCuccio M."/>
            <person name="Hlavina W."/>
            <person name="Kapustin Y."/>
            <person name="Meric P."/>
            <person name="Maglott D."/>
            <person name="Birtle Z."/>
            <person name="Marques A.C."/>
            <person name="Graves T."/>
            <person name="Zhou S."/>
            <person name="Teague B."/>
            <person name="Potamousis K."/>
            <person name="Churas C."/>
            <person name="Place M."/>
            <person name="Herschleb J."/>
            <person name="Runnheim R."/>
            <person name="Forrest D."/>
            <person name="Amos-Landgraf J."/>
            <person name="Schwartz D.C."/>
            <person name="Cheng Z."/>
            <person name="Lindblad-Toh K."/>
            <person name="Eichler E.E."/>
            <person name="Ponting C.P."/>
        </authorList>
    </citation>
    <scope>NUCLEOTIDE SEQUENCE [LARGE SCALE GENOMIC DNA]</scope>
    <source>
        <strain>C57BL/6J</strain>
    </source>
</reference>
<reference key="3">
    <citation type="submission" date="2009-01" db="UniProtKB">
        <authorList>
            <person name="Lubec G."/>
            <person name="Sunyer B."/>
            <person name="Chen W.-Q."/>
        </authorList>
    </citation>
    <scope>PROTEIN SEQUENCE OF 212-223</scope>
    <scope>IDENTIFICATION BY MASS SPECTROMETRY</scope>
    <source>
        <strain>OF1</strain>
        <tissue>Hippocampus</tissue>
    </source>
</reference>
<reference key="4">
    <citation type="journal article" date="2006" name="Mol. Cell. Proteomics">
        <title>Comprehensive identification of phosphorylation sites in postsynaptic density preparations.</title>
        <authorList>
            <person name="Trinidad J.C."/>
            <person name="Specht C.G."/>
            <person name="Thalhammer A."/>
            <person name="Schoepfer R."/>
            <person name="Burlingame A.L."/>
        </authorList>
    </citation>
    <scope>PHOSPHORYLATION [LARGE SCALE ANALYSIS] AT SER-768</scope>
    <scope>IDENTIFICATION BY MASS SPECTROMETRY [LARGE SCALE ANALYSIS]</scope>
    <source>
        <tissue>Brain</tissue>
    </source>
</reference>
<reference key="5">
    <citation type="journal article" date="2010" name="Cell">
        <title>A tissue-specific atlas of mouse protein phosphorylation and expression.</title>
        <authorList>
            <person name="Huttlin E.L."/>
            <person name="Jedrychowski M.P."/>
            <person name="Elias J.E."/>
            <person name="Goswami T."/>
            <person name="Rad R."/>
            <person name="Beausoleil S.A."/>
            <person name="Villen J."/>
            <person name="Haas W."/>
            <person name="Sowa M.E."/>
            <person name="Gygi S.P."/>
        </authorList>
    </citation>
    <scope>PHOSPHORYLATION [LARGE SCALE ANALYSIS] AT SER-179</scope>
    <scope>IDENTIFICATION BY MASS SPECTROMETRY [LARGE SCALE ANALYSIS]</scope>
    <source>
        <tissue>Brain</tissue>
    </source>
</reference>
<dbReference type="EMBL" id="AK032182">
    <property type="protein sequence ID" value="BAC27747.1"/>
    <property type="status" value="ALT_FRAME"/>
    <property type="molecule type" value="mRNA"/>
</dbReference>
<dbReference type="EMBL" id="AK032632">
    <property type="protein sequence ID" value="BAC27960.1"/>
    <property type="status" value="ALT_SEQ"/>
    <property type="molecule type" value="mRNA"/>
</dbReference>
<dbReference type="EMBL" id="AL808119">
    <property type="status" value="NOT_ANNOTATED_CDS"/>
    <property type="molecule type" value="Genomic_DNA"/>
</dbReference>
<dbReference type="CCDS" id="CCDS38254.1"/>
<dbReference type="RefSeq" id="NP_766447.2">
    <property type="nucleotide sequence ID" value="NM_172859.3"/>
</dbReference>
<dbReference type="SMR" id="Q8C008"/>
<dbReference type="BioGRID" id="232341">
    <property type="interactions" value="7"/>
</dbReference>
<dbReference type="FunCoup" id="Q8C008">
    <property type="interactions" value="155"/>
</dbReference>
<dbReference type="IntAct" id="Q8C008">
    <property type="interactions" value="6"/>
</dbReference>
<dbReference type="MINT" id="Q8C008"/>
<dbReference type="STRING" id="10090.ENSMUSP00000080643"/>
<dbReference type="GlyGen" id="Q8C008">
    <property type="glycosylation" value="1 site, 1 N-linked glycan (1 site)"/>
</dbReference>
<dbReference type="iPTMnet" id="Q8C008"/>
<dbReference type="PhosphoSitePlus" id="Q8C008"/>
<dbReference type="PaxDb" id="10090-ENSMUSP00000080643"/>
<dbReference type="ProteomicsDB" id="277429"/>
<dbReference type="Antibodypedia" id="54096">
    <property type="antibodies" value="20 antibodies from 9 providers"/>
</dbReference>
<dbReference type="DNASU" id="241688"/>
<dbReference type="Ensembl" id="ENSMUST00000081982.12">
    <property type="protein sequence ID" value="ENSMUSP00000080643.6"/>
    <property type="gene ID" value="ENSMUSG00000037259.16"/>
</dbReference>
<dbReference type="GeneID" id="241688"/>
<dbReference type="KEGG" id="mmu:241688"/>
<dbReference type="UCSC" id="uc008mrd.1">
    <property type="organism name" value="mouse"/>
</dbReference>
<dbReference type="AGR" id="MGI:2139080"/>
<dbReference type="CTD" id="55184"/>
<dbReference type="MGI" id="MGI:2139080">
    <property type="gene designation" value="Dzank1"/>
</dbReference>
<dbReference type="VEuPathDB" id="HostDB:ENSMUSG00000037259"/>
<dbReference type="eggNOG" id="ENOG502QTJR">
    <property type="taxonomic scope" value="Eukaryota"/>
</dbReference>
<dbReference type="GeneTree" id="ENSGT00390000000549"/>
<dbReference type="InParanoid" id="Q8C008"/>
<dbReference type="OMA" id="GFAHIRS"/>
<dbReference type="TreeFam" id="TF351270"/>
<dbReference type="BioGRID-ORCS" id="241688">
    <property type="hits" value="0 hits in 76 CRISPR screens"/>
</dbReference>
<dbReference type="CD-CODE" id="CE726F99">
    <property type="entry name" value="Postsynaptic density"/>
</dbReference>
<dbReference type="ChiTaRS" id="Dzank1">
    <property type="organism name" value="mouse"/>
</dbReference>
<dbReference type="PRO" id="PR:Q8C008"/>
<dbReference type="Proteomes" id="UP000000589">
    <property type="component" value="Chromosome 2"/>
</dbReference>
<dbReference type="RNAct" id="Q8C008">
    <property type="molecule type" value="protein"/>
</dbReference>
<dbReference type="Bgee" id="ENSMUSG00000037259">
    <property type="expression patterns" value="Expressed in lateral hypothalamic area and 176 other cell types or tissues"/>
</dbReference>
<dbReference type="ExpressionAtlas" id="Q8C008">
    <property type="expression patterns" value="baseline and differential"/>
</dbReference>
<dbReference type="GO" id="GO:0042995">
    <property type="term" value="C:cell projection"/>
    <property type="evidence" value="ECO:0007669"/>
    <property type="project" value="UniProtKB-KW"/>
</dbReference>
<dbReference type="GO" id="GO:0005813">
    <property type="term" value="C:centrosome"/>
    <property type="evidence" value="ECO:0000250"/>
    <property type="project" value="UniProtKB"/>
</dbReference>
<dbReference type="GO" id="GO:0005737">
    <property type="term" value="C:cytoplasm"/>
    <property type="evidence" value="ECO:0007669"/>
    <property type="project" value="UniProtKB-KW"/>
</dbReference>
<dbReference type="GO" id="GO:0008270">
    <property type="term" value="F:zinc ion binding"/>
    <property type="evidence" value="ECO:0007669"/>
    <property type="project" value="UniProtKB-KW"/>
</dbReference>
<dbReference type="Gene3D" id="1.25.40.20">
    <property type="entry name" value="Ankyrin repeat-containing domain"/>
    <property type="match status" value="1"/>
</dbReference>
<dbReference type="InterPro" id="IPR002110">
    <property type="entry name" value="Ankyrin_rpt"/>
</dbReference>
<dbReference type="InterPro" id="IPR036770">
    <property type="entry name" value="Ankyrin_rpt-contain_sf"/>
</dbReference>
<dbReference type="InterPro" id="IPR052481">
    <property type="entry name" value="DZAN1"/>
</dbReference>
<dbReference type="InterPro" id="IPR025874">
    <property type="entry name" value="DZR"/>
</dbReference>
<dbReference type="InterPro" id="IPR026876">
    <property type="entry name" value="Fn3_assoc_repeat"/>
</dbReference>
<dbReference type="PANTHER" id="PTHR16058">
    <property type="entry name" value="DOUBLE ZINC RIBBON AND ANKYRIN REPEAT-CONTAINING PROTEIN 1"/>
    <property type="match status" value="1"/>
</dbReference>
<dbReference type="PANTHER" id="PTHR16058:SF4">
    <property type="entry name" value="DOUBLE ZINC RIBBON AND ANKYRIN REPEAT-CONTAINING PROTEIN 1"/>
    <property type="match status" value="1"/>
</dbReference>
<dbReference type="Pfam" id="PF12796">
    <property type="entry name" value="Ank_2"/>
    <property type="match status" value="1"/>
</dbReference>
<dbReference type="Pfam" id="PF12773">
    <property type="entry name" value="DZR"/>
    <property type="match status" value="2"/>
</dbReference>
<dbReference type="Pfam" id="PF13287">
    <property type="entry name" value="Fn3_assoc"/>
    <property type="match status" value="1"/>
</dbReference>
<dbReference type="SUPFAM" id="SSF48403">
    <property type="entry name" value="Ankyrin repeat"/>
    <property type="match status" value="1"/>
</dbReference>
<evidence type="ECO:0000250" key="1">
    <source>
        <dbReference type="UniProtKB" id="Q1LXR6"/>
    </source>
</evidence>
<evidence type="ECO:0000250" key="2">
    <source>
        <dbReference type="UniProtKB" id="Q9NVP4"/>
    </source>
</evidence>
<evidence type="ECO:0000255" key="3"/>
<evidence type="ECO:0000305" key="4"/>
<evidence type="ECO:0007744" key="5">
    <source>
    </source>
</evidence>
<evidence type="ECO:0007744" key="6">
    <source>
    </source>
</evidence>
<proteinExistence type="evidence at protein level"/>
<gene>
    <name type="primary">Dzank1</name>
</gene>
<name>DZAN1_MOUSE</name>
<sequence length="778" mass="85025">MTAGSVCAPQIIPLRVPQPGKANHEIDTNTLLEMKSDTPDVNIYYTLDGSKPDFLKKVGSGENNTFKYVKPITLPDGKIQVKAVAVSKDCRQSGIVTKVFQVDYEPPKMVSSEDNVEDALKGFSKQELKNGFVGPKLRKKYKNAENKSTWNVNLRRLADLKVGERADPKTLKDLRFAESPLEIPAYHEGASARLPTHQAQSPGFAHITGQKSLTSTEIMRIQRETDFLKCAHCLASRPSDPFARFCHECGAPVPPIFGYRLPPPEGAQMGLCAECGSMVPMNTPICVVCEAPLAPQLRPQASLYLKERVICRTCGTGNPAHLRYCVTCEGPLPPTQEQWLCNGDEVPHPPARNGETISCSRCGCQNLWEASFCDWCGAMLGISASHSVCPKCGASNHLTARFCGSCGIYVKSITRFRMHNSLAIVAGAPRPFPEPRSAWQSLNVPLPTSASGSKKDTGTQTSGLFYPSGKLLAKKELEAASHRQRQEKMSDHRPVLTAVSPGRGYWRKQLDHISAHLRSYAQNNPEFRALIAEPRMGKLISATVHEDGYEVSIRLNYIQVSNKSLYFNKSVNLSDHFLSSVTEGGNGLYDSRSSLVSAYSQSVSDTPESIKKMKNLKAKSFLVNPEPLTPENKLLLEEVGSSGKGRLSVLEQLLDEGADPNCCDSQGRPAVIVAVVNKHYEAIPVLAQRGADIDQQWGPFRNTALHEATLLGLEGRESIATLLGCNANAQKKNTRGQTAYDIALEMGDDLTSSLFAAKFTQGLEDQLSPPGNRILGDS</sequence>
<comment type="function">
    <text evidence="1">Involved in vesicle transport in photoreceptor cells.</text>
</comment>
<comment type="subunit">
    <text evidence="2">Interacts with NINL. Associates with DYNC1H1 and multiple dynein intermediate and light chains as well as actin-binding proteins.</text>
</comment>
<comment type="subcellular location">
    <subcellularLocation>
        <location evidence="2">Cytoplasm</location>
        <location evidence="2">Cytoskeleton</location>
        <location evidence="2">Microtubule organizing center</location>
        <location evidence="2">Centrosome</location>
    </subcellularLocation>
    <subcellularLocation>
        <location evidence="2">Cytoplasm</location>
        <location evidence="2">Cytoskeleton</location>
        <location evidence="2">Cilium basal body</location>
    </subcellularLocation>
    <text evidence="2">Colocalizes with NINL at the base of cilia.</text>
</comment>
<comment type="sequence caution" evidence="4">
    <conflict type="frameshift">
        <sequence resource="EMBL-CDS" id="BAC27747"/>
    </conflict>
</comment>
<comment type="sequence caution" evidence="4">
    <conflict type="miscellaneous discrepancy">
        <sequence resource="EMBL-CDS" id="BAC27960"/>
    </conflict>
    <text>Cloning artifact.</text>
</comment>
<feature type="chain" id="PRO_0000235912" description="Double zinc ribbon and ankyrin repeat-containing protein 1">
    <location>
        <begin position="1"/>
        <end position="778"/>
    </location>
</feature>
<feature type="repeat" description="ANK 1" evidence="3">
    <location>
        <begin position="631"/>
        <end position="662"/>
    </location>
</feature>
<feature type="repeat" description="ANK 2" evidence="3">
    <location>
        <begin position="666"/>
        <end position="695"/>
    </location>
</feature>
<feature type="zinc finger region" description="DZANK-type 1" evidence="3">
    <location>
        <begin position="230"/>
        <end position="289"/>
    </location>
</feature>
<feature type="zinc finger region" description="DZANK-type 2" evidence="3">
    <location>
        <begin position="359"/>
        <end position="407"/>
    </location>
</feature>
<feature type="modified residue" description="Phosphoserine" evidence="6">
    <location>
        <position position="179"/>
    </location>
</feature>
<feature type="modified residue" description="Phosphoserine" evidence="2">
    <location>
        <position position="201"/>
    </location>
</feature>
<feature type="modified residue" description="Phosphoserine" evidence="5">
    <location>
        <position position="768"/>
    </location>
</feature>
<feature type="sequence conflict" description="In Ref. 1; BAC27960." evidence="4" ref="1">
    <original>P</original>
    <variation>H</variation>
    <location>
        <position position="202"/>
    </location>
</feature>
<feature type="sequence conflict" description="In Ref. 1; BAC27747." evidence="4" ref="1">
    <original>I</original>
    <variation>N</variation>
    <location>
        <position position="693"/>
    </location>
</feature>
<feature type="sequence conflict" description="In Ref. 1; BAC27747." evidence="4" ref="1">
    <original>L</original>
    <variation>Q</variation>
    <location>
        <position position="710"/>
    </location>
</feature>
<accession>Q8C008</accession>
<accession>A2AN93</accession>
<accession>Q8C060</accession>
<organism>
    <name type="scientific">Mus musculus</name>
    <name type="common">Mouse</name>
    <dbReference type="NCBI Taxonomy" id="10090"/>
    <lineage>
        <taxon>Eukaryota</taxon>
        <taxon>Metazoa</taxon>
        <taxon>Chordata</taxon>
        <taxon>Craniata</taxon>
        <taxon>Vertebrata</taxon>
        <taxon>Euteleostomi</taxon>
        <taxon>Mammalia</taxon>
        <taxon>Eutheria</taxon>
        <taxon>Euarchontoglires</taxon>
        <taxon>Glires</taxon>
        <taxon>Rodentia</taxon>
        <taxon>Myomorpha</taxon>
        <taxon>Muroidea</taxon>
        <taxon>Muridae</taxon>
        <taxon>Murinae</taxon>
        <taxon>Mus</taxon>
        <taxon>Mus</taxon>
    </lineage>
</organism>